<dbReference type="EC" id="3.2.1.23" evidence="1"/>
<dbReference type="EMBL" id="BA000038">
    <property type="protein sequence ID" value="BAC96191.1"/>
    <property type="molecule type" value="Genomic_DNA"/>
</dbReference>
<dbReference type="RefSeq" id="WP_011151589.1">
    <property type="nucleotide sequence ID" value="NC_005140.1"/>
</dbReference>
<dbReference type="SMR" id="Q7MG04"/>
<dbReference type="STRING" id="672.VV93_v1c31610"/>
<dbReference type="CAZy" id="GH2">
    <property type="family name" value="Glycoside Hydrolase Family 2"/>
</dbReference>
<dbReference type="KEGG" id="vvy:VVA0165"/>
<dbReference type="PATRIC" id="fig|196600.6.peg.3382"/>
<dbReference type="eggNOG" id="COG3250">
    <property type="taxonomic scope" value="Bacteria"/>
</dbReference>
<dbReference type="HOGENOM" id="CLU_002346_0_2_6"/>
<dbReference type="Proteomes" id="UP000002675">
    <property type="component" value="Chromosome II"/>
</dbReference>
<dbReference type="GO" id="GO:0009341">
    <property type="term" value="C:beta-galactosidase complex"/>
    <property type="evidence" value="ECO:0007669"/>
    <property type="project" value="InterPro"/>
</dbReference>
<dbReference type="GO" id="GO:0004565">
    <property type="term" value="F:beta-galactosidase activity"/>
    <property type="evidence" value="ECO:0007669"/>
    <property type="project" value="UniProtKB-EC"/>
</dbReference>
<dbReference type="GO" id="GO:0030246">
    <property type="term" value="F:carbohydrate binding"/>
    <property type="evidence" value="ECO:0007669"/>
    <property type="project" value="InterPro"/>
</dbReference>
<dbReference type="GO" id="GO:0000287">
    <property type="term" value="F:magnesium ion binding"/>
    <property type="evidence" value="ECO:0007669"/>
    <property type="project" value="UniProtKB-UniRule"/>
</dbReference>
<dbReference type="GO" id="GO:0005990">
    <property type="term" value="P:lactose catabolic process"/>
    <property type="evidence" value="ECO:0007669"/>
    <property type="project" value="TreeGrafter"/>
</dbReference>
<dbReference type="FunFam" id="3.20.20.80:FF:000018">
    <property type="entry name" value="Beta-galactosidase"/>
    <property type="match status" value="1"/>
</dbReference>
<dbReference type="Gene3D" id="2.70.98.10">
    <property type="match status" value="1"/>
</dbReference>
<dbReference type="Gene3D" id="2.60.120.260">
    <property type="entry name" value="Galactose-binding domain-like"/>
    <property type="match status" value="1"/>
</dbReference>
<dbReference type="Gene3D" id="3.20.20.80">
    <property type="entry name" value="Glycosidases"/>
    <property type="match status" value="1"/>
</dbReference>
<dbReference type="Gene3D" id="2.60.40.10">
    <property type="entry name" value="Immunoglobulins"/>
    <property type="match status" value="2"/>
</dbReference>
<dbReference type="HAMAP" id="MF_01687">
    <property type="entry name" value="Beta_gal"/>
    <property type="match status" value="1"/>
</dbReference>
<dbReference type="InterPro" id="IPR004199">
    <property type="entry name" value="B-gal_small/dom_5"/>
</dbReference>
<dbReference type="InterPro" id="IPR050347">
    <property type="entry name" value="Bact_Beta-galactosidase"/>
</dbReference>
<dbReference type="InterPro" id="IPR036156">
    <property type="entry name" value="Beta-gal/glucu_dom_sf"/>
</dbReference>
<dbReference type="InterPro" id="IPR011013">
    <property type="entry name" value="Gal_mutarotase_sf_dom"/>
</dbReference>
<dbReference type="InterPro" id="IPR008979">
    <property type="entry name" value="Galactose-bd-like_sf"/>
</dbReference>
<dbReference type="InterPro" id="IPR014718">
    <property type="entry name" value="GH-type_carb-bd"/>
</dbReference>
<dbReference type="InterPro" id="IPR006101">
    <property type="entry name" value="Glyco_hydro_2"/>
</dbReference>
<dbReference type="InterPro" id="IPR023232">
    <property type="entry name" value="Glyco_hydro_2_AS"/>
</dbReference>
<dbReference type="InterPro" id="IPR023933">
    <property type="entry name" value="Glyco_hydro_2_beta_Galsidase"/>
</dbReference>
<dbReference type="InterPro" id="IPR006103">
    <property type="entry name" value="Glyco_hydro_2_cat"/>
</dbReference>
<dbReference type="InterPro" id="IPR006102">
    <property type="entry name" value="Glyco_hydro_2_Ig-like"/>
</dbReference>
<dbReference type="InterPro" id="IPR006104">
    <property type="entry name" value="Glyco_hydro_2_N"/>
</dbReference>
<dbReference type="InterPro" id="IPR017853">
    <property type="entry name" value="Glycoside_hydrolase_SF"/>
</dbReference>
<dbReference type="InterPro" id="IPR013783">
    <property type="entry name" value="Ig-like_fold"/>
</dbReference>
<dbReference type="InterPro" id="IPR032312">
    <property type="entry name" value="LacZ_4"/>
</dbReference>
<dbReference type="NCBIfam" id="NF007074">
    <property type="entry name" value="PRK09525.1"/>
    <property type="match status" value="1"/>
</dbReference>
<dbReference type="PANTHER" id="PTHR46323">
    <property type="entry name" value="BETA-GALACTOSIDASE"/>
    <property type="match status" value="1"/>
</dbReference>
<dbReference type="PANTHER" id="PTHR46323:SF2">
    <property type="entry name" value="BETA-GALACTOSIDASE"/>
    <property type="match status" value="1"/>
</dbReference>
<dbReference type="Pfam" id="PF02929">
    <property type="entry name" value="Bgal_small_N"/>
    <property type="match status" value="1"/>
</dbReference>
<dbReference type="Pfam" id="PF00703">
    <property type="entry name" value="Glyco_hydro_2"/>
    <property type="match status" value="1"/>
</dbReference>
<dbReference type="Pfam" id="PF02836">
    <property type="entry name" value="Glyco_hydro_2_C"/>
    <property type="match status" value="1"/>
</dbReference>
<dbReference type="Pfam" id="PF02837">
    <property type="entry name" value="Glyco_hydro_2_N"/>
    <property type="match status" value="1"/>
</dbReference>
<dbReference type="Pfam" id="PF16353">
    <property type="entry name" value="LacZ_4"/>
    <property type="match status" value="1"/>
</dbReference>
<dbReference type="PRINTS" id="PR00132">
    <property type="entry name" value="GLHYDRLASE2"/>
</dbReference>
<dbReference type="SMART" id="SM01038">
    <property type="entry name" value="Bgal_small_N"/>
    <property type="match status" value="1"/>
</dbReference>
<dbReference type="SUPFAM" id="SSF51445">
    <property type="entry name" value="(Trans)glycosidases"/>
    <property type="match status" value="1"/>
</dbReference>
<dbReference type="SUPFAM" id="SSF49303">
    <property type="entry name" value="beta-Galactosidase/glucuronidase domain"/>
    <property type="match status" value="2"/>
</dbReference>
<dbReference type="SUPFAM" id="SSF74650">
    <property type="entry name" value="Galactose mutarotase-like"/>
    <property type="match status" value="1"/>
</dbReference>
<dbReference type="SUPFAM" id="SSF49785">
    <property type="entry name" value="Galactose-binding domain-like"/>
    <property type="match status" value="1"/>
</dbReference>
<dbReference type="PROSITE" id="PS00608">
    <property type="entry name" value="GLYCOSYL_HYDROL_F2_2"/>
    <property type="match status" value="1"/>
</dbReference>
<proteinExistence type="inferred from homology"/>
<gene>
    <name evidence="1" type="primary">lacZ</name>
    <name type="ordered locus">VVA0165</name>
</gene>
<evidence type="ECO:0000255" key="1">
    <source>
        <dbReference type="HAMAP-Rule" id="MF_01687"/>
    </source>
</evidence>
<comment type="catalytic activity">
    <reaction evidence="1">
        <text>Hydrolysis of terminal non-reducing beta-D-galactose residues in beta-D-galactosides.</text>
        <dbReference type="EC" id="3.2.1.23"/>
    </reaction>
</comment>
<comment type="cofactor">
    <cofactor evidence="1">
        <name>Mg(2+)</name>
        <dbReference type="ChEBI" id="CHEBI:18420"/>
    </cofactor>
    <text evidence="1">Binds 2 magnesium ions per monomer.</text>
</comment>
<comment type="cofactor">
    <cofactor evidence="1">
        <name>Na(+)</name>
        <dbReference type="ChEBI" id="CHEBI:29101"/>
    </cofactor>
    <text evidence="1">Binds 1 sodium ion per monomer.</text>
</comment>
<comment type="subunit">
    <text evidence="1">Homotetramer.</text>
</comment>
<comment type="similarity">
    <text evidence="1">Belongs to the glycosyl hydrolase 2 family.</text>
</comment>
<sequence length="1031" mass="117763">MTAFSEILQRRDWENPQSVNIHCLKAHSPLASFRDMAHARDGIHAQRQSLNGQWKFKLFDAPEQVDGQFTQADFNDAEWDEIPVPSNWQLHGYDKPIYANIKYPFDVNPPFVPRENPTGCYRTRVSLSPEDLLNTQRIIFDGVNSAFHLWCNGTWVGYSQDSRLPAEFDLTSHLVAGENTLAVMVMRWCDGSYLEDQDMWWLSGIFRDVTLLSKPQHCIEDVFITPDLDACYRDGSLSIVTTIAAPETYQVQVQLFEGTQAVTEPNIDRPHNRRIDERGTWNDVVFQTLHLREPKKWTAETPNLYRLVVSLLDENGTHLESEAYPVGFRKVEISEGQLKLNGKPLLIRGVNRHEHHPELGHVMTEEDMIRDICLMKQYNFNAVRTAHYPNHPRWYELCDQYGLYVCDEANIETHGMQPMSRLSSDPQWAHAYMSRYTQMVLRDKNHPSIIIWSLGNESGHGSNHNAMYAWSKNFDPSRPVQYEGGGSNTTATDIIAPMYARVNTLIADEAVPKWPIKKWISLPNETRPLILCEYAHAMGNSLGSFDEYWAAFREFPRLQGGFIWDWVDQGLSQWDENGQHFWAYGGDFGDEINDRQFCINGLIFPDRTVHPTLQEAKYCQRMITVSLQEQTQKACTLLVTNENLFRATDNEQLNWSLLENGQVIQTGSLALSVEADSQTRLEIALNFTPKAQAQYHLNTDICLIEATSWAPAGHVVATEQMALRNHAGLAIPTLRTQPAPKLTQDGHAIVVSSLDEKHQWRWDSQSGLLMEWNVDGKAQMLAAPQDNFFRAPLDNDIGISEVDNVDPNAWVCRWEMAGIGQWERHCVHCDSETLAHTVVVTTTFAYHFGGDVQAITQWTHTLSNDGEMLLDVDVTLADTLPPMPRIGLELQLPLYQADTPITWQGLGPFENYPDRLAAARFGLHTQTLAQMHTPYIFPTDSGLRCGTQWLQVNELAISGDFQFSVSQYAQQQLAEAKHTHDLLAQERIYLRLDHQHMGVGGDDSWSPSVHKEFQLTEKHYRYQLRFKPASR</sequence>
<name>BGAL_VIBVY</name>
<protein>
    <recommendedName>
        <fullName evidence="1">Beta-galactosidase</fullName>
        <shortName evidence="1">Beta-gal</shortName>
        <ecNumber evidence="1">3.2.1.23</ecNumber>
    </recommendedName>
    <alternativeName>
        <fullName evidence="1">Lactase</fullName>
    </alternativeName>
</protein>
<keyword id="KW-0326">Glycosidase</keyword>
<keyword id="KW-0378">Hydrolase</keyword>
<keyword id="KW-0460">Magnesium</keyword>
<keyword id="KW-0479">Metal-binding</keyword>
<keyword id="KW-0915">Sodium</keyword>
<feature type="chain" id="PRO_0000367013" description="Beta-galactosidase">
    <location>
        <begin position="1"/>
        <end position="1031"/>
    </location>
</feature>
<feature type="active site" description="Proton donor" evidence="1">
    <location>
        <position position="457"/>
    </location>
</feature>
<feature type="active site" description="Nucleophile" evidence="1">
    <location>
        <position position="533"/>
    </location>
</feature>
<feature type="binding site" evidence="1">
    <location>
        <position position="100"/>
    </location>
    <ligand>
        <name>substrate</name>
    </ligand>
</feature>
<feature type="binding site" evidence="1">
    <location>
        <position position="198"/>
    </location>
    <ligand>
        <name>Na(+)</name>
        <dbReference type="ChEBI" id="CHEBI:29101"/>
    </ligand>
</feature>
<feature type="binding site" evidence="1">
    <location>
        <position position="198"/>
    </location>
    <ligand>
        <name>substrate</name>
    </ligand>
</feature>
<feature type="binding site" evidence="1">
    <location>
        <position position="412"/>
    </location>
    <ligand>
        <name>Mg(2+)</name>
        <dbReference type="ChEBI" id="CHEBI:18420"/>
        <label>1</label>
    </ligand>
</feature>
<feature type="binding site" evidence="1">
    <location>
        <position position="414"/>
    </location>
    <ligand>
        <name>Mg(2+)</name>
        <dbReference type="ChEBI" id="CHEBI:18420"/>
        <label>1</label>
    </ligand>
</feature>
<feature type="binding site" evidence="1">
    <location>
        <position position="457"/>
    </location>
    <ligand>
        <name>Mg(2+)</name>
        <dbReference type="ChEBI" id="CHEBI:18420"/>
        <label>1</label>
    </ligand>
</feature>
<feature type="binding site" evidence="1">
    <location>
        <position position="457"/>
    </location>
    <ligand>
        <name>substrate</name>
    </ligand>
</feature>
<feature type="binding site" evidence="1">
    <location>
        <begin position="533"/>
        <end position="536"/>
    </location>
    <ligand>
        <name>substrate</name>
    </ligand>
</feature>
<feature type="binding site" evidence="1">
    <location>
        <position position="593"/>
    </location>
    <ligand>
        <name>Mg(2+)</name>
        <dbReference type="ChEBI" id="CHEBI:18420"/>
        <label>2</label>
    </ligand>
</feature>
<feature type="binding site" evidence="1">
    <location>
        <position position="597"/>
    </location>
    <ligand>
        <name>Na(+)</name>
        <dbReference type="ChEBI" id="CHEBI:29101"/>
    </ligand>
</feature>
<feature type="binding site" evidence="1">
    <location>
        <position position="600"/>
    </location>
    <ligand>
        <name>Na(+)</name>
        <dbReference type="ChEBI" id="CHEBI:29101"/>
    </ligand>
</feature>
<feature type="binding site" evidence="1">
    <location>
        <position position="600"/>
    </location>
    <ligand>
        <name>substrate</name>
    </ligand>
</feature>
<feature type="binding site" evidence="1">
    <location>
        <position position="1005"/>
    </location>
    <ligand>
        <name>substrate</name>
    </ligand>
</feature>
<feature type="site" description="Transition state stabilizer" evidence="1">
    <location>
        <position position="353"/>
    </location>
</feature>
<feature type="site" description="Transition state stabilizer" evidence="1">
    <location>
        <position position="387"/>
    </location>
</feature>
<accession>Q7MG04</accession>
<reference key="1">
    <citation type="journal article" date="2003" name="Genome Res.">
        <title>Comparative genome analysis of Vibrio vulnificus, a marine pathogen.</title>
        <authorList>
            <person name="Chen C.-Y."/>
            <person name="Wu K.-M."/>
            <person name="Chang Y.-C."/>
            <person name="Chang C.-H."/>
            <person name="Tsai H.-C."/>
            <person name="Liao T.-L."/>
            <person name="Liu Y.-M."/>
            <person name="Chen H.-J."/>
            <person name="Shen A.B.-T."/>
            <person name="Li J.-C."/>
            <person name="Su T.-L."/>
            <person name="Shao C.-P."/>
            <person name="Lee C.-T."/>
            <person name="Hor L.-I."/>
            <person name="Tsai S.-F."/>
        </authorList>
    </citation>
    <scope>NUCLEOTIDE SEQUENCE [LARGE SCALE GENOMIC DNA]</scope>
    <source>
        <strain>YJ016</strain>
    </source>
</reference>
<organism>
    <name type="scientific">Vibrio vulnificus (strain YJ016)</name>
    <dbReference type="NCBI Taxonomy" id="196600"/>
    <lineage>
        <taxon>Bacteria</taxon>
        <taxon>Pseudomonadati</taxon>
        <taxon>Pseudomonadota</taxon>
        <taxon>Gammaproteobacteria</taxon>
        <taxon>Vibrionales</taxon>
        <taxon>Vibrionaceae</taxon>
        <taxon>Vibrio</taxon>
    </lineage>
</organism>